<proteinExistence type="inferred from homology"/>
<sequence>IIQRSRFLAKAAPAASEEEALAFLAAHREPQATHNAYAYRIGPLYRFSDDGEPRAPGRPILHAIEAAGLDRVVVLVVRYFGGVKLGAGGLVRAYGGVAAEALRRAPKAPLLDWVEVAFRVPFPEVGRVHGLLRARHLEAEEAYLPEGVRFALRLPPGGEGGPCLKALSDLTRGRLWVEG</sequence>
<comment type="similarity">
    <text evidence="1">Belongs to the IMPACT family.</text>
</comment>
<evidence type="ECO:0000305" key="1"/>
<reference key="1">
    <citation type="journal article" date="1992" name="Nucleic Acids Res.">
        <title>Molecular cloning and nucleotide sequence of the DNA polymerase gene from Thermus flavus.</title>
        <authorList>
            <person name="Akhmetzjanov A.A."/>
            <person name="Vakhitov V.A."/>
        </authorList>
    </citation>
    <scope>NUCLEOTIDE SEQUENCE [GENOMIC DNA]</scope>
    <source>
        <strain>ACM B-1257</strain>
    </source>
</reference>
<reference key="2">
    <citation type="journal article" date="1994" name="EMBO J.">
        <title>Yeast chromosome III: new gene functions.</title>
        <authorList>
            <person name="Koonin E.V."/>
            <person name="Bork P."/>
            <person name="Sander C."/>
        </authorList>
    </citation>
    <scope>IDENTIFICATION</scope>
    <scope>SIMILARITY</scope>
</reference>
<organism>
    <name type="scientific">Thermus thermophilus</name>
    <dbReference type="NCBI Taxonomy" id="274"/>
    <lineage>
        <taxon>Bacteria</taxon>
        <taxon>Thermotogati</taxon>
        <taxon>Deinococcota</taxon>
        <taxon>Deinococci</taxon>
        <taxon>Thermales</taxon>
        <taxon>Thermaceae</taxon>
        <taxon>Thermus</taxon>
    </lineage>
</organism>
<accession>P32438</accession>
<name>YPOL_THETH</name>
<dbReference type="EMBL" id="X66105">
    <property type="status" value="NOT_ANNOTATED_CDS"/>
    <property type="molecule type" value="Genomic_DNA"/>
</dbReference>
<dbReference type="SMR" id="P32438"/>
<dbReference type="GO" id="GO:0005737">
    <property type="term" value="C:cytoplasm"/>
    <property type="evidence" value="ECO:0007669"/>
    <property type="project" value="TreeGrafter"/>
</dbReference>
<dbReference type="GO" id="GO:0006446">
    <property type="term" value="P:regulation of translational initiation"/>
    <property type="evidence" value="ECO:0007669"/>
    <property type="project" value="TreeGrafter"/>
</dbReference>
<dbReference type="Gene3D" id="3.30.70.240">
    <property type="match status" value="1"/>
</dbReference>
<dbReference type="Gene3D" id="3.30.230.30">
    <property type="entry name" value="Impact, N-terminal domain"/>
    <property type="match status" value="1"/>
</dbReference>
<dbReference type="InterPro" id="IPR035647">
    <property type="entry name" value="EFG_III/V"/>
</dbReference>
<dbReference type="InterPro" id="IPR023582">
    <property type="entry name" value="Impact"/>
</dbReference>
<dbReference type="InterPro" id="IPR001498">
    <property type="entry name" value="Impact_N"/>
</dbReference>
<dbReference type="InterPro" id="IPR036956">
    <property type="entry name" value="Impact_N_sf"/>
</dbReference>
<dbReference type="InterPro" id="IPR020568">
    <property type="entry name" value="Ribosomal_Su5_D2-typ_SF"/>
</dbReference>
<dbReference type="InterPro" id="IPR020569">
    <property type="entry name" value="UPF0029_Impact_CS"/>
</dbReference>
<dbReference type="PANTHER" id="PTHR16301:SF20">
    <property type="entry name" value="IMPACT FAMILY MEMBER YIGZ"/>
    <property type="match status" value="1"/>
</dbReference>
<dbReference type="PANTHER" id="PTHR16301">
    <property type="entry name" value="IMPACT-RELATED"/>
    <property type="match status" value="1"/>
</dbReference>
<dbReference type="Pfam" id="PF01205">
    <property type="entry name" value="UPF0029"/>
    <property type="match status" value="1"/>
</dbReference>
<dbReference type="SUPFAM" id="SSF54980">
    <property type="entry name" value="EF-G C-terminal domain-like"/>
    <property type="match status" value="1"/>
</dbReference>
<dbReference type="SUPFAM" id="SSF54211">
    <property type="entry name" value="Ribosomal protein S5 domain 2-like"/>
    <property type="match status" value="1"/>
</dbReference>
<dbReference type="PROSITE" id="PS00910">
    <property type="entry name" value="UPF0029"/>
    <property type="match status" value="1"/>
</dbReference>
<protein>
    <recommendedName>
        <fullName>IMPACT family member in pol 5'region</fullName>
    </recommendedName>
</protein>
<feature type="chain" id="PRO_0000207662" description="IMPACT family member in pol 5'region">
    <location>
        <begin position="1" status="less than"/>
        <end position="179"/>
    </location>
</feature>
<feature type="non-terminal residue">
    <location>
        <position position="1"/>
    </location>
</feature>